<feature type="chain" id="PRO_0000085952" description="G2-specific protein kinase fin1">
    <location>
        <begin position="1"/>
        <end position="722"/>
    </location>
</feature>
<feature type="domain" description="Protein kinase" evidence="1">
    <location>
        <begin position="4"/>
        <end position="281"/>
    </location>
</feature>
<feature type="region of interest" description="Disordered" evidence="3">
    <location>
        <begin position="528"/>
        <end position="557"/>
    </location>
</feature>
<feature type="compositionally biased region" description="Polar residues" evidence="3">
    <location>
        <begin position="535"/>
        <end position="546"/>
    </location>
</feature>
<feature type="active site" description="Proton acceptor" evidence="1 2">
    <location>
        <position position="151"/>
    </location>
</feature>
<feature type="binding site" evidence="1">
    <location>
        <begin position="10"/>
        <end position="18"/>
    </location>
    <ligand>
        <name>ATP</name>
        <dbReference type="ChEBI" id="CHEBI:30616"/>
    </ligand>
</feature>
<feature type="binding site" evidence="1">
    <location>
        <position position="33"/>
    </location>
    <ligand>
        <name>ATP</name>
        <dbReference type="ChEBI" id="CHEBI:30616"/>
    </ligand>
</feature>
<organism>
    <name type="scientific">Schizosaccharomyces pombe (strain 972 / ATCC 24843)</name>
    <name type="common">Fission yeast</name>
    <dbReference type="NCBI Taxonomy" id="284812"/>
    <lineage>
        <taxon>Eukaryota</taxon>
        <taxon>Fungi</taxon>
        <taxon>Dikarya</taxon>
        <taxon>Ascomycota</taxon>
        <taxon>Taphrinomycotina</taxon>
        <taxon>Schizosaccharomycetes</taxon>
        <taxon>Schizosaccharomycetales</taxon>
        <taxon>Schizosaccharomycetaceae</taxon>
        <taxon>Schizosaccharomyces</taxon>
    </lineage>
</organism>
<sequence>MEKYKILECIGHGSFGRIYKVQRLKDGALLAQKEIHFGNITRQEKQYIADEVNILRNLKHPNIVQYCGEELNRSAQVINLYMEYCGHGDLANLIQRYKEEKKRFTEQEVLKFFTQLLLALYRCHYGENAPACDSQWPREIFHPKQSVLHRDIKPANIFLDENNSVKLGDFGLSKLLDNTRVFTQSYVGTPYYMSPEIIRSSPYSAKSDVWALGCVIFEICMLTHPFEGRSYLELQRNICQGNLSCWDHHYSDDVFLLIRHCLEVNSDLRPTTYQLLRSPILSDIRSKLESERVVLEQSDLLHKKHQMLIQLENDLQFREQRLSARESELENVIASRLAQREEILRRELEKQLRDMDARYQRHMQTVVNSMQKMRVTSPVDHNEQPESSTAEMFVDCTIEASQSPLLHIPKLGISKPLQTLSCPGFTLTTQQPILKRPTLRKELSSRALHTTATLMKYRANASSLRTTPIDKDGQITSLQQKNGTSNQVADCMNKLLHTSLDGKKLSPSELCNKFSDGEGLPNRKVSKLSVESDETAVSASSGESVPTDSTLTDTKSKSVFVHPPSPQSLYVEKLEKLNIRSDEVSKPSKASKTLHGYALPSLASPYDVHAEEKIARENEMDGNFKTMKINQHPDEYVLRTPKKIQLLEGQKRSPVKQLGRLGYNKLRRSAMDNAGLELRKAASTSNYTSLQSRTLPGSWRDDEEEIPRPFLRKMLDARMMRA</sequence>
<accession>O13839</accession>
<gene>
    <name type="primary">fin1</name>
    <name type="ORF">SPAC19E9.02</name>
</gene>
<name>FIN1_SCHPO</name>
<comment type="function">
    <text evidence="4">Promotes chromosome condensation and nuclear envelope dynamics during mitosis. Activity appears at metaphase-anaphase transition.</text>
</comment>
<comment type="catalytic activity">
    <reaction>
        <text>L-seryl-[protein] + ATP = O-phospho-L-seryl-[protein] + ADP + H(+)</text>
        <dbReference type="Rhea" id="RHEA:17989"/>
        <dbReference type="Rhea" id="RHEA-COMP:9863"/>
        <dbReference type="Rhea" id="RHEA-COMP:11604"/>
        <dbReference type="ChEBI" id="CHEBI:15378"/>
        <dbReference type="ChEBI" id="CHEBI:29999"/>
        <dbReference type="ChEBI" id="CHEBI:30616"/>
        <dbReference type="ChEBI" id="CHEBI:83421"/>
        <dbReference type="ChEBI" id="CHEBI:456216"/>
        <dbReference type="EC" id="2.7.11.1"/>
    </reaction>
</comment>
<comment type="catalytic activity">
    <reaction>
        <text>L-threonyl-[protein] + ATP = O-phospho-L-threonyl-[protein] + ADP + H(+)</text>
        <dbReference type="Rhea" id="RHEA:46608"/>
        <dbReference type="Rhea" id="RHEA-COMP:11060"/>
        <dbReference type="Rhea" id="RHEA-COMP:11605"/>
        <dbReference type="ChEBI" id="CHEBI:15378"/>
        <dbReference type="ChEBI" id="CHEBI:30013"/>
        <dbReference type="ChEBI" id="CHEBI:30616"/>
        <dbReference type="ChEBI" id="CHEBI:61977"/>
        <dbReference type="ChEBI" id="CHEBI:456216"/>
        <dbReference type="EC" id="2.7.11.1"/>
    </reaction>
</comment>
<comment type="subcellular location">
    <subcellularLocation>
        <location evidence="4">Cytoplasm</location>
        <location evidence="4">Cytoskeleton</location>
        <location evidence="4">Microtubule organizing center</location>
        <location evidence="4">Spindle pole body</location>
    </subcellularLocation>
</comment>
<comment type="similarity">
    <text evidence="1">Belongs to the protein kinase superfamily. Ser/Thr protein kinase family. NIMA subfamily.</text>
</comment>
<proteinExistence type="inferred from homology"/>
<evidence type="ECO:0000255" key="1">
    <source>
        <dbReference type="PROSITE-ProRule" id="PRU00159"/>
    </source>
</evidence>
<evidence type="ECO:0000255" key="2">
    <source>
        <dbReference type="PROSITE-ProRule" id="PRU10027"/>
    </source>
</evidence>
<evidence type="ECO:0000256" key="3">
    <source>
        <dbReference type="SAM" id="MobiDB-lite"/>
    </source>
</evidence>
<evidence type="ECO:0000269" key="4">
    <source>
    </source>
</evidence>
<protein>
    <recommendedName>
        <fullName>G2-specific protein kinase fin1</fullName>
        <ecNumber>2.7.11.1</ecNumber>
    </recommendedName>
</protein>
<reference key="1">
    <citation type="journal article" date="2002" name="Nature">
        <title>The genome sequence of Schizosaccharomyces pombe.</title>
        <authorList>
            <person name="Wood V."/>
            <person name="Gwilliam R."/>
            <person name="Rajandream M.A."/>
            <person name="Lyne M.H."/>
            <person name="Lyne R."/>
            <person name="Stewart A."/>
            <person name="Sgouros J.G."/>
            <person name="Peat N."/>
            <person name="Hayles J."/>
            <person name="Baker S.G."/>
            <person name="Basham D."/>
            <person name="Bowman S."/>
            <person name="Brooks K."/>
            <person name="Brown D."/>
            <person name="Brown S."/>
            <person name="Chillingworth T."/>
            <person name="Churcher C.M."/>
            <person name="Collins M."/>
            <person name="Connor R."/>
            <person name="Cronin A."/>
            <person name="Davis P."/>
            <person name="Feltwell T."/>
            <person name="Fraser A."/>
            <person name="Gentles S."/>
            <person name="Goble A."/>
            <person name="Hamlin N."/>
            <person name="Harris D.E."/>
            <person name="Hidalgo J."/>
            <person name="Hodgson G."/>
            <person name="Holroyd S."/>
            <person name="Hornsby T."/>
            <person name="Howarth S."/>
            <person name="Huckle E.J."/>
            <person name="Hunt S."/>
            <person name="Jagels K."/>
            <person name="James K.D."/>
            <person name="Jones L."/>
            <person name="Jones M."/>
            <person name="Leather S."/>
            <person name="McDonald S."/>
            <person name="McLean J."/>
            <person name="Mooney P."/>
            <person name="Moule S."/>
            <person name="Mungall K.L."/>
            <person name="Murphy L.D."/>
            <person name="Niblett D."/>
            <person name="Odell C."/>
            <person name="Oliver K."/>
            <person name="O'Neil S."/>
            <person name="Pearson D."/>
            <person name="Quail M.A."/>
            <person name="Rabbinowitsch E."/>
            <person name="Rutherford K.M."/>
            <person name="Rutter S."/>
            <person name="Saunders D."/>
            <person name="Seeger K."/>
            <person name="Sharp S."/>
            <person name="Skelton J."/>
            <person name="Simmonds M.N."/>
            <person name="Squares R."/>
            <person name="Squares S."/>
            <person name="Stevens K."/>
            <person name="Taylor K."/>
            <person name="Taylor R.G."/>
            <person name="Tivey A."/>
            <person name="Walsh S.V."/>
            <person name="Warren T."/>
            <person name="Whitehead S."/>
            <person name="Woodward J.R."/>
            <person name="Volckaert G."/>
            <person name="Aert R."/>
            <person name="Robben J."/>
            <person name="Grymonprez B."/>
            <person name="Weltjens I."/>
            <person name="Vanstreels E."/>
            <person name="Rieger M."/>
            <person name="Schaefer M."/>
            <person name="Mueller-Auer S."/>
            <person name="Gabel C."/>
            <person name="Fuchs M."/>
            <person name="Duesterhoeft A."/>
            <person name="Fritzc C."/>
            <person name="Holzer E."/>
            <person name="Moestl D."/>
            <person name="Hilbert H."/>
            <person name="Borzym K."/>
            <person name="Langer I."/>
            <person name="Beck A."/>
            <person name="Lehrach H."/>
            <person name="Reinhardt R."/>
            <person name="Pohl T.M."/>
            <person name="Eger P."/>
            <person name="Zimmermann W."/>
            <person name="Wedler H."/>
            <person name="Wambutt R."/>
            <person name="Purnelle B."/>
            <person name="Goffeau A."/>
            <person name="Cadieu E."/>
            <person name="Dreano S."/>
            <person name="Gloux S."/>
            <person name="Lelaure V."/>
            <person name="Mottier S."/>
            <person name="Galibert F."/>
            <person name="Aves S.J."/>
            <person name="Xiang Z."/>
            <person name="Hunt C."/>
            <person name="Moore K."/>
            <person name="Hurst S.M."/>
            <person name="Lucas M."/>
            <person name="Rochet M."/>
            <person name="Gaillardin C."/>
            <person name="Tallada V.A."/>
            <person name="Garzon A."/>
            <person name="Thode G."/>
            <person name="Daga R.R."/>
            <person name="Cruzado L."/>
            <person name="Jimenez J."/>
            <person name="Sanchez M."/>
            <person name="del Rey F."/>
            <person name="Benito J."/>
            <person name="Dominguez A."/>
            <person name="Revuelta J.L."/>
            <person name="Moreno S."/>
            <person name="Armstrong J."/>
            <person name="Forsburg S.L."/>
            <person name="Cerutti L."/>
            <person name="Lowe T."/>
            <person name="McCombie W.R."/>
            <person name="Paulsen I."/>
            <person name="Potashkin J."/>
            <person name="Shpakovski G.V."/>
            <person name="Ussery D."/>
            <person name="Barrell B.G."/>
            <person name="Nurse P."/>
        </authorList>
    </citation>
    <scope>NUCLEOTIDE SEQUENCE [LARGE SCALE GENOMIC DNA]</scope>
    <source>
        <strain>972 / ATCC 24843</strain>
    </source>
</reference>
<reference key="2">
    <citation type="journal article" date="2002" name="EMBO J.">
        <title>The fission yeast NIMA kinase Fin1p is required for spindle function and nuclear envelope integrity.</title>
        <authorList>
            <person name="Krien M.J.E."/>
            <person name="West R.R."/>
            <person name="John U.P."/>
            <person name="Koniaras K."/>
            <person name="McIntosh J.R."/>
            <person name="O'Connell M.J."/>
        </authorList>
    </citation>
    <scope>FUNCTION</scope>
    <scope>SUBCELLULAR LOCATION</scope>
</reference>
<keyword id="KW-0067">ATP-binding</keyword>
<keyword id="KW-0131">Cell cycle</keyword>
<keyword id="KW-0132">Cell division</keyword>
<keyword id="KW-0963">Cytoplasm</keyword>
<keyword id="KW-0206">Cytoskeleton</keyword>
<keyword id="KW-0418">Kinase</keyword>
<keyword id="KW-0498">Mitosis</keyword>
<keyword id="KW-0547">Nucleotide-binding</keyword>
<keyword id="KW-1185">Reference proteome</keyword>
<keyword id="KW-0723">Serine/threonine-protein kinase</keyword>
<keyword id="KW-0808">Transferase</keyword>
<dbReference type="EC" id="2.7.11.1"/>
<dbReference type="EMBL" id="CU329670">
    <property type="protein sequence ID" value="CAB11653.1"/>
    <property type="molecule type" value="Genomic_DNA"/>
</dbReference>
<dbReference type="PIR" id="T37970">
    <property type="entry name" value="T37970"/>
</dbReference>
<dbReference type="RefSeq" id="NP_593305.1">
    <property type="nucleotide sequence ID" value="NM_001018735.2"/>
</dbReference>
<dbReference type="SMR" id="O13839"/>
<dbReference type="BioGRID" id="278709">
    <property type="interactions" value="134"/>
</dbReference>
<dbReference type="FunCoup" id="O13839">
    <property type="interactions" value="196"/>
</dbReference>
<dbReference type="STRING" id="284812.O13839"/>
<dbReference type="iPTMnet" id="O13839"/>
<dbReference type="PaxDb" id="4896-SPAC19E9.02.1"/>
<dbReference type="EnsemblFungi" id="SPAC19E9.02.1">
    <property type="protein sequence ID" value="SPAC19E9.02.1:pep"/>
    <property type="gene ID" value="SPAC19E9.02"/>
</dbReference>
<dbReference type="GeneID" id="2542237"/>
<dbReference type="KEGG" id="spo:2542237"/>
<dbReference type="PomBase" id="SPAC19E9.02">
    <property type="gene designation" value="fin1"/>
</dbReference>
<dbReference type="VEuPathDB" id="FungiDB:SPAC19E9.02"/>
<dbReference type="eggNOG" id="KOG0591">
    <property type="taxonomic scope" value="Eukaryota"/>
</dbReference>
<dbReference type="HOGENOM" id="CLU_404982_0_0_1"/>
<dbReference type="InParanoid" id="O13839"/>
<dbReference type="OMA" id="ILECIGH"/>
<dbReference type="PhylomeDB" id="O13839"/>
<dbReference type="BRENDA" id="2.7.11.1">
    <property type="organism ID" value="5613"/>
</dbReference>
<dbReference type="CD-CODE" id="576F0A76">
    <property type="entry name" value="Centrosome"/>
</dbReference>
<dbReference type="PRO" id="PR:O13839"/>
<dbReference type="Proteomes" id="UP000002485">
    <property type="component" value="Chromosome I"/>
</dbReference>
<dbReference type="GO" id="GO:0005737">
    <property type="term" value="C:cytoplasm"/>
    <property type="evidence" value="ECO:0000314"/>
    <property type="project" value="PomBase"/>
</dbReference>
<dbReference type="GO" id="GO:0005829">
    <property type="term" value="C:cytosol"/>
    <property type="evidence" value="ECO:0007005"/>
    <property type="project" value="PomBase"/>
</dbReference>
<dbReference type="GO" id="GO:0072686">
    <property type="term" value="C:mitotic spindle"/>
    <property type="evidence" value="ECO:0000314"/>
    <property type="project" value="PomBase"/>
</dbReference>
<dbReference type="GO" id="GO:0044732">
    <property type="term" value="C:mitotic spindle pole body"/>
    <property type="evidence" value="ECO:0000314"/>
    <property type="project" value="PomBase"/>
</dbReference>
<dbReference type="GO" id="GO:0005635">
    <property type="term" value="C:nuclear envelope"/>
    <property type="evidence" value="ECO:0007005"/>
    <property type="project" value="PomBase"/>
</dbReference>
<dbReference type="GO" id="GO:0005634">
    <property type="term" value="C:nucleus"/>
    <property type="evidence" value="ECO:0007005"/>
    <property type="project" value="PomBase"/>
</dbReference>
<dbReference type="GO" id="GO:0005524">
    <property type="term" value="F:ATP binding"/>
    <property type="evidence" value="ECO:0007669"/>
    <property type="project" value="UniProtKB-KW"/>
</dbReference>
<dbReference type="GO" id="GO:0106310">
    <property type="term" value="F:protein serine kinase activity"/>
    <property type="evidence" value="ECO:0007669"/>
    <property type="project" value="RHEA"/>
</dbReference>
<dbReference type="GO" id="GO:0004674">
    <property type="term" value="F:protein serine/threonine kinase activity"/>
    <property type="evidence" value="ECO:0000314"/>
    <property type="project" value="PomBase"/>
</dbReference>
<dbReference type="GO" id="GO:0004712">
    <property type="term" value="F:protein serine/threonine/tyrosine kinase activity"/>
    <property type="evidence" value="ECO:0000269"/>
    <property type="project" value="PomBase"/>
</dbReference>
<dbReference type="GO" id="GO:0051301">
    <property type="term" value="P:cell division"/>
    <property type="evidence" value="ECO:0007669"/>
    <property type="project" value="UniProtKB-KW"/>
</dbReference>
<dbReference type="GO" id="GO:0007059">
    <property type="term" value="P:chromosome segregation"/>
    <property type="evidence" value="ECO:0000318"/>
    <property type="project" value="GO_Central"/>
</dbReference>
<dbReference type="GO" id="GO:0031030">
    <property type="term" value="P:negative regulation of septation initiation signaling"/>
    <property type="evidence" value="ECO:0000269"/>
    <property type="project" value="PomBase"/>
</dbReference>
<dbReference type="GO" id="GO:0006998">
    <property type="term" value="P:nuclear envelope organization"/>
    <property type="evidence" value="ECO:0000315"/>
    <property type="project" value="PomBase"/>
</dbReference>
<dbReference type="GO" id="GO:0010971">
    <property type="term" value="P:positive regulation of G2/M transition of mitotic cell cycle"/>
    <property type="evidence" value="ECO:0000315"/>
    <property type="project" value="PomBase"/>
</dbReference>
<dbReference type="CDD" id="cd08217">
    <property type="entry name" value="STKc_Nek2"/>
    <property type="match status" value="1"/>
</dbReference>
<dbReference type="Gene3D" id="3.30.200.20">
    <property type="entry name" value="Phosphorylase Kinase, domain 1"/>
    <property type="match status" value="1"/>
</dbReference>
<dbReference type="Gene3D" id="1.10.510.10">
    <property type="entry name" value="Transferase(Phosphotransferase) domain 1"/>
    <property type="match status" value="1"/>
</dbReference>
<dbReference type="InterPro" id="IPR011009">
    <property type="entry name" value="Kinase-like_dom_sf"/>
</dbReference>
<dbReference type="InterPro" id="IPR051131">
    <property type="entry name" value="NEK_Ser/Thr_kinase_NIMA"/>
</dbReference>
<dbReference type="InterPro" id="IPR000719">
    <property type="entry name" value="Prot_kinase_dom"/>
</dbReference>
<dbReference type="InterPro" id="IPR008271">
    <property type="entry name" value="Ser/Thr_kinase_AS"/>
</dbReference>
<dbReference type="PANTHER" id="PTHR44899">
    <property type="entry name" value="CAMK FAMILY PROTEIN KINASE"/>
    <property type="match status" value="1"/>
</dbReference>
<dbReference type="PANTHER" id="PTHR44899:SF10">
    <property type="entry name" value="NIMA-RELATED KINASE 2"/>
    <property type="match status" value="1"/>
</dbReference>
<dbReference type="Pfam" id="PF00069">
    <property type="entry name" value="Pkinase"/>
    <property type="match status" value="1"/>
</dbReference>
<dbReference type="SMART" id="SM00220">
    <property type="entry name" value="S_TKc"/>
    <property type="match status" value="1"/>
</dbReference>
<dbReference type="SUPFAM" id="SSF56112">
    <property type="entry name" value="Protein kinase-like (PK-like)"/>
    <property type="match status" value="1"/>
</dbReference>
<dbReference type="PROSITE" id="PS50011">
    <property type="entry name" value="PROTEIN_KINASE_DOM"/>
    <property type="match status" value="1"/>
</dbReference>
<dbReference type="PROSITE" id="PS00108">
    <property type="entry name" value="PROTEIN_KINASE_ST"/>
    <property type="match status" value="1"/>
</dbReference>